<gene>
    <name evidence="1" type="primary">gltX</name>
    <name type="ordered locus">Rmag_0474</name>
</gene>
<name>SYE_RUTMC</name>
<organism>
    <name type="scientific">Ruthia magnifica subsp. Calyptogena magnifica</name>
    <dbReference type="NCBI Taxonomy" id="413404"/>
    <lineage>
        <taxon>Bacteria</taxon>
        <taxon>Pseudomonadati</taxon>
        <taxon>Pseudomonadota</taxon>
        <taxon>Gammaproteobacteria</taxon>
        <taxon>Candidatus Pseudothioglobaceae</taxon>
        <taxon>Candidatus Ruthturnera</taxon>
    </lineage>
</organism>
<comment type="function">
    <text evidence="1">Catalyzes the attachment of glutamate to tRNA(Glu) in a two-step reaction: glutamate is first activated by ATP to form Glu-AMP and then transferred to the acceptor end of tRNA(Glu).</text>
</comment>
<comment type="catalytic activity">
    <reaction evidence="1">
        <text>tRNA(Glu) + L-glutamate + ATP = L-glutamyl-tRNA(Glu) + AMP + diphosphate</text>
        <dbReference type="Rhea" id="RHEA:23540"/>
        <dbReference type="Rhea" id="RHEA-COMP:9663"/>
        <dbReference type="Rhea" id="RHEA-COMP:9680"/>
        <dbReference type="ChEBI" id="CHEBI:29985"/>
        <dbReference type="ChEBI" id="CHEBI:30616"/>
        <dbReference type="ChEBI" id="CHEBI:33019"/>
        <dbReference type="ChEBI" id="CHEBI:78442"/>
        <dbReference type="ChEBI" id="CHEBI:78520"/>
        <dbReference type="ChEBI" id="CHEBI:456215"/>
        <dbReference type="EC" id="6.1.1.17"/>
    </reaction>
</comment>
<comment type="cofactor">
    <cofactor evidence="1">
        <name>Zn(2+)</name>
        <dbReference type="ChEBI" id="CHEBI:29105"/>
    </cofactor>
    <text evidence="1">Binds 1 zinc ion per subunit.</text>
</comment>
<comment type="subunit">
    <text evidence="1">Monomer.</text>
</comment>
<comment type="subcellular location">
    <subcellularLocation>
        <location evidence="1">Cytoplasm</location>
    </subcellularLocation>
</comment>
<comment type="similarity">
    <text evidence="1">Belongs to the class-I aminoacyl-tRNA synthetase family. Glutamate--tRNA ligase type 1 subfamily.</text>
</comment>
<keyword id="KW-0030">Aminoacyl-tRNA synthetase</keyword>
<keyword id="KW-0067">ATP-binding</keyword>
<keyword id="KW-0963">Cytoplasm</keyword>
<keyword id="KW-0436">Ligase</keyword>
<keyword id="KW-0479">Metal-binding</keyword>
<keyword id="KW-0547">Nucleotide-binding</keyword>
<keyword id="KW-0648">Protein biosynthesis</keyword>
<keyword id="KW-0862">Zinc</keyword>
<evidence type="ECO:0000255" key="1">
    <source>
        <dbReference type="HAMAP-Rule" id="MF_00022"/>
    </source>
</evidence>
<proteinExistence type="inferred from homology"/>
<accession>A1AWC3</accession>
<sequence>MKSRFAPSPTGCLHIGGARTALFAWVWAKKQHGKFVLRIEDTDLERSNQASVDAILQGMNWLGLDYDEGPFYQTDRFNRYKQVVRQLLDEKKAYYCECSKERLQILHEDLIKQGKKVRYDGCCRDKNLNDGVVRFNNPEDGLVIFNDVIKGQISINNKELDDLIIVRSDGTPTYNLTVVVDDHDMQIDCVIRGDDHINNTPKQINLYQALGWHLPEFAHLPMILSSDGARLSKRHDAVSIMTYRDAGFLPEALLNYLARLGWSYGDQEIFSMDEIVKLFELKSINKAPASFNQDKLLWLNQKIIKNSSVENLLNNLTWHLQNQAITITNAPNIEAVVQYLQNRCKTLVDMAGEVKMFYQDFDTFDEKLAKRYLKDKTPLKHLFAKLEALRIWKANNIKQAVKEVCFELNISFGKVGQPFRLALSGNGNAGSIDIVAELVGKNKALSRLKMAIDS</sequence>
<dbReference type="EC" id="6.1.1.17" evidence="1"/>
<dbReference type="EMBL" id="CP000488">
    <property type="protein sequence ID" value="ABL02230.1"/>
    <property type="molecule type" value="Genomic_DNA"/>
</dbReference>
<dbReference type="RefSeq" id="WP_011737855.1">
    <property type="nucleotide sequence ID" value="NC_008610.1"/>
</dbReference>
<dbReference type="SMR" id="A1AWC3"/>
<dbReference type="STRING" id="413404.Rmag_0474"/>
<dbReference type="KEGG" id="rma:Rmag_0474"/>
<dbReference type="eggNOG" id="COG0008">
    <property type="taxonomic scope" value="Bacteria"/>
</dbReference>
<dbReference type="HOGENOM" id="CLU_015768_6_0_6"/>
<dbReference type="OrthoDB" id="9807503at2"/>
<dbReference type="Proteomes" id="UP000002587">
    <property type="component" value="Chromosome"/>
</dbReference>
<dbReference type="GO" id="GO:0005829">
    <property type="term" value="C:cytosol"/>
    <property type="evidence" value="ECO:0007669"/>
    <property type="project" value="TreeGrafter"/>
</dbReference>
<dbReference type="GO" id="GO:0005524">
    <property type="term" value="F:ATP binding"/>
    <property type="evidence" value="ECO:0007669"/>
    <property type="project" value="UniProtKB-UniRule"/>
</dbReference>
<dbReference type="GO" id="GO:0004818">
    <property type="term" value="F:glutamate-tRNA ligase activity"/>
    <property type="evidence" value="ECO:0007669"/>
    <property type="project" value="UniProtKB-UniRule"/>
</dbReference>
<dbReference type="GO" id="GO:0000049">
    <property type="term" value="F:tRNA binding"/>
    <property type="evidence" value="ECO:0007669"/>
    <property type="project" value="InterPro"/>
</dbReference>
<dbReference type="GO" id="GO:0008270">
    <property type="term" value="F:zinc ion binding"/>
    <property type="evidence" value="ECO:0007669"/>
    <property type="project" value="UniProtKB-UniRule"/>
</dbReference>
<dbReference type="GO" id="GO:0006424">
    <property type="term" value="P:glutamyl-tRNA aminoacylation"/>
    <property type="evidence" value="ECO:0007669"/>
    <property type="project" value="UniProtKB-UniRule"/>
</dbReference>
<dbReference type="CDD" id="cd00808">
    <property type="entry name" value="GluRS_core"/>
    <property type="match status" value="1"/>
</dbReference>
<dbReference type="FunFam" id="3.40.50.620:FF:000007">
    <property type="entry name" value="Glutamate--tRNA ligase"/>
    <property type="match status" value="1"/>
</dbReference>
<dbReference type="Gene3D" id="1.10.10.350">
    <property type="match status" value="1"/>
</dbReference>
<dbReference type="Gene3D" id="3.40.50.620">
    <property type="entry name" value="HUPs"/>
    <property type="match status" value="1"/>
</dbReference>
<dbReference type="HAMAP" id="MF_00022">
    <property type="entry name" value="Glu_tRNA_synth_type1"/>
    <property type="match status" value="1"/>
</dbReference>
<dbReference type="InterPro" id="IPR045462">
    <property type="entry name" value="aa-tRNA-synth_I_cd-bd"/>
</dbReference>
<dbReference type="InterPro" id="IPR020751">
    <property type="entry name" value="aa-tRNA-synth_I_codon-bd_sub2"/>
</dbReference>
<dbReference type="InterPro" id="IPR001412">
    <property type="entry name" value="aa-tRNA-synth_I_CS"/>
</dbReference>
<dbReference type="InterPro" id="IPR008925">
    <property type="entry name" value="aa_tRNA-synth_I_cd-bd_sf"/>
</dbReference>
<dbReference type="InterPro" id="IPR004527">
    <property type="entry name" value="Glu-tRNA-ligase_bac/mito"/>
</dbReference>
<dbReference type="InterPro" id="IPR000924">
    <property type="entry name" value="Glu/Gln-tRNA-synth"/>
</dbReference>
<dbReference type="InterPro" id="IPR020058">
    <property type="entry name" value="Glu/Gln-tRNA-synth_Ib_cat-dom"/>
</dbReference>
<dbReference type="InterPro" id="IPR049940">
    <property type="entry name" value="GluQ/Sye"/>
</dbReference>
<dbReference type="InterPro" id="IPR033910">
    <property type="entry name" value="GluRS_core"/>
</dbReference>
<dbReference type="InterPro" id="IPR014729">
    <property type="entry name" value="Rossmann-like_a/b/a_fold"/>
</dbReference>
<dbReference type="NCBIfam" id="TIGR00464">
    <property type="entry name" value="gltX_bact"/>
    <property type="match status" value="1"/>
</dbReference>
<dbReference type="PANTHER" id="PTHR43311">
    <property type="entry name" value="GLUTAMATE--TRNA LIGASE"/>
    <property type="match status" value="1"/>
</dbReference>
<dbReference type="PANTHER" id="PTHR43311:SF2">
    <property type="entry name" value="GLUTAMATE--TRNA LIGASE, MITOCHONDRIAL-RELATED"/>
    <property type="match status" value="1"/>
</dbReference>
<dbReference type="Pfam" id="PF19269">
    <property type="entry name" value="Anticodon_2"/>
    <property type="match status" value="1"/>
</dbReference>
<dbReference type="Pfam" id="PF00749">
    <property type="entry name" value="tRNA-synt_1c"/>
    <property type="match status" value="1"/>
</dbReference>
<dbReference type="PRINTS" id="PR00987">
    <property type="entry name" value="TRNASYNTHGLU"/>
</dbReference>
<dbReference type="SUPFAM" id="SSF48163">
    <property type="entry name" value="An anticodon-binding domain of class I aminoacyl-tRNA synthetases"/>
    <property type="match status" value="1"/>
</dbReference>
<dbReference type="SUPFAM" id="SSF52374">
    <property type="entry name" value="Nucleotidylyl transferase"/>
    <property type="match status" value="1"/>
</dbReference>
<dbReference type="PROSITE" id="PS00178">
    <property type="entry name" value="AA_TRNA_LIGASE_I"/>
    <property type="match status" value="1"/>
</dbReference>
<feature type="chain" id="PRO_0000330994" description="Glutamate--tRNA ligase">
    <location>
        <begin position="1"/>
        <end position="454"/>
    </location>
</feature>
<feature type="short sequence motif" description="'HIGH' region" evidence="1">
    <location>
        <begin position="7"/>
        <end position="17"/>
    </location>
</feature>
<feature type="short sequence motif" description="'KMSKS' region" evidence="1">
    <location>
        <begin position="230"/>
        <end position="234"/>
    </location>
</feature>
<feature type="binding site" evidence="1">
    <location>
        <position position="96"/>
    </location>
    <ligand>
        <name>Zn(2+)</name>
        <dbReference type="ChEBI" id="CHEBI:29105"/>
    </ligand>
</feature>
<feature type="binding site" evidence="1">
    <location>
        <position position="98"/>
    </location>
    <ligand>
        <name>Zn(2+)</name>
        <dbReference type="ChEBI" id="CHEBI:29105"/>
    </ligand>
</feature>
<feature type="binding site" evidence="1">
    <location>
        <position position="123"/>
    </location>
    <ligand>
        <name>Zn(2+)</name>
        <dbReference type="ChEBI" id="CHEBI:29105"/>
    </ligand>
</feature>
<feature type="binding site" evidence="1">
    <location>
        <position position="125"/>
    </location>
    <ligand>
        <name>Zn(2+)</name>
        <dbReference type="ChEBI" id="CHEBI:29105"/>
    </ligand>
</feature>
<feature type="binding site" evidence="1">
    <location>
        <position position="233"/>
    </location>
    <ligand>
        <name>ATP</name>
        <dbReference type="ChEBI" id="CHEBI:30616"/>
    </ligand>
</feature>
<protein>
    <recommendedName>
        <fullName evidence="1">Glutamate--tRNA ligase</fullName>
        <ecNumber evidence="1">6.1.1.17</ecNumber>
    </recommendedName>
    <alternativeName>
        <fullName evidence="1">Glutamyl-tRNA synthetase</fullName>
        <shortName evidence="1">GluRS</shortName>
    </alternativeName>
</protein>
<reference key="1">
    <citation type="journal article" date="2007" name="Science">
        <title>The Calyptogena magnifica chemoautotrophic symbiont genome.</title>
        <authorList>
            <person name="Newton I.L.G."/>
            <person name="Woyke T."/>
            <person name="Auchtung T.A."/>
            <person name="Dilly G.F."/>
            <person name="Dutton R.J."/>
            <person name="Fisher M.C."/>
            <person name="Fontanez K.M."/>
            <person name="Lau E."/>
            <person name="Stewart F.J."/>
            <person name="Richardson P.M."/>
            <person name="Barry K.W."/>
            <person name="Saunders E."/>
            <person name="Detter J.C."/>
            <person name="Wu D."/>
            <person name="Eisen J.A."/>
            <person name="Cavanaugh C.M."/>
        </authorList>
    </citation>
    <scope>NUCLEOTIDE SEQUENCE [LARGE SCALE GENOMIC DNA]</scope>
</reference>